<protein>
    <recommendedName>
        <fullName evidence="1">Isopentenyl-diphosphate delta-isomerase</fullName>
        <shortName evidence="1">IPP isomerase</shortName>
        <ecNumber evidence="1">5.3.3.2</ecNumber>
    </recommendedName>
    <alternativeName>
        <fullName evidence="1">Isopentenyl diphosphate:dimethylallyl diphosphate isomerase</fullName>
    </alternativeName>
    <alternativeName>
        <fullName evidence="1">Isopentenyl pyrophosphate isomerase</fullName>
    </alternativeName>
    <alternativeName>
        <fullName evidence="1">Type 2 isopentenyl diphosphate isomerase</fullName>
        <shortName evidence="1">IDI-2</shortName>
    </alternativeName>
</protein>
<feature type="chain" id="PRO_0000134442" description="Isopentenyl-diphosphate delta-isomerase">
    <location>
        <begin position="1"/>
        <end position="360"/>
    </location>
</feature>
<feature type="binding site" evidence="1">
    <location>
        <begin position="12"/>
        <end position="13"/>
    </location>
    <ligand>
        <name>substrate</name>
    </ligand>
</feature>
<feature type="binding site" evidence="1">
    <location>
        <begin position="69"/>
        <end position="71"/>
    </location>
    <ligand>
        <name>FMN</name>
        <dbReference type="ChEBI" id="CHEBI:58210"/>
    </ligand>
</feature>
<feature type="binding site" evidence="1">
    <location>
        <begin position="99"/>
        <end position="101"/>
    </location>
    <ligand>
        <name>substrate</name>
    </ligand>
</feature>
<feature type="binding site" evidence="1">
    <location>
        <position position="99"/>
    </location>
    <ligand>
        <name>FMN</name>
        <dbReference type="ChEBI" id="CHEBI:58210"/>
    </ligand>
</feature>
<feature type="binding site" evidence="1">
    <location>
        <position position="130"/>
    </location>
    <ligand>
        <name>FMN</name>
        <dbReference type="ChEBI" id="CHEBI:58210"/>
    </ligand>
</feature>
<feature type="binding site" evidence="1">
    <location>
        <position position="164"/>
    </location>
    <ligand>
        <name>substrate</name>
    </ligand>
</feature>
<feature type="binding site" evidence="1">
    <location>
        <position position="165"/>
    </location>
    <ligand>
        <name>Mg(2+)</name>
        <dbReference type="ChEBI" id="CHEBI:18420"/>
    </ligand>
</feature>
<feature type="binding site" evidence="1">
    <location>
        <position position="196"/>
    </location>
    <ligand>
        <name>FMN</name>
        <dbReference type="ChEBI" id="CHEBI:58210"/>
    </ligand>
</feature>
<feature type="binding site" evidence="1">
    <location>
        <position position="226"/>
    </location>
    <ligand>
        <name>FMN</name>
        <dbReference type="ChEBI" id="CHEBI:58210"/>
    </ligand>
</feature>
<feature type="binding site" evidence="1">
    <location>
        <begin position="277"/>
        <end position="279"/>
    </location>
    <ligand>
        <name>FMN</name>
        <dbReference type="ChEBI" id="CHEBI:58210"/>
    </ligand>
</feature>
<feature type="binding site" evidence="1">
    <location>
        <begin position="298"/>
        <end position="299"/>
    </location>
    <ligand>
        <name>FMN</name>
        <dbReference type="ChEBI" id="CHEBI:58210"/>
    </ligand>
</feature>
<name>IDI2_HALSA</name>
<comment type="function">
    <text evidence="1">Involved in the biosynthesis of isoprenoids. Catalyzes the 1,3-allylic rearrangement of the homoallylic substrate isopentenyl (IPP) to its allylic isomer, dimethylallyl diphosphate (DMAPP).</text>
</comment>
<comment type="catalytic activity">
    <reaction evidence="1">
        <text>isopentenyl diphosphate = dimethylallyl diphosphate</text>
        <dbReference type="Rhea" id="RHEA:23284"/>
        <dbReference type="ChEBI" id="CHEBI:57623"/>
        <dbReference type="ChEBI" id="CHEBI:128769"/>
        <dbReference type="EC" id="5.3.3.2"/>
    </reaction>
</comment>
<comment type="cofactor">
    <cofactor evidence="1">
        <name>FMN</name>
        <dbReference type="ChEBI" id="CHEBI:58210"/>
    </cofactor>
</comment>
<comment type="cofactor">
    <cofactor evidence="1">
        <name>NADPH</name>
        <dbReference type="ChEBI" id="CHEBI:57783"/>
    </cofactor>
</comment>
<comment type="cofactor">
    <cofactor evidence="1">
        <name>Mg(2+)</name>
        <dbReference type="ChEBI" id="CHEBI:18420"/>
    </cofactor>
</comment>
<comment type="subunit">
    <text evidence="1">Homooctamer. Dimer of tetramers.</text>
</comment>
<comment type="subcellular location">
    <subcellularLocation>
        <location evidence="1">Cytoplasm</location>
    </subcellularLocation>
</comment>
<comment type="similarity">
    <text evidence="1">Belongs to the IPP isomerase type 2 family.</text>
</comment>
<comment type="sequence caution" evidence="2">
    <conflict type="erroneous initiation">
        <sequence resource="EMBL-CDS" id="AAC82844"/>
    </conflict>
    <text>Extended N-terminus.</text>
</comment>
<comment type="sequence caution" evidence="2">
    <conflict type="erroneous initiation">
        <sequence resource="EMBL-CDS" id="AAC82933"/>
    </conflict>
    <text>Extended N-terminus.</text>
</comment>
<gene>
    <name evidence="1" type="primary">fni</name>
    <name type="synonym">fni1</name>
    <name type="ordered locus">VNG_5084G</name>
    <name type="ORF">H0660</name>
</gene>
<gene>
    <name evidence="1" type="primary">fni2</name>
    <name type="ordered locus">VNG_5213G</name>
    <name type="ORF">H1696</name>
</gene>
<gene>
    <name evidence="1" type="primary">fni3</name>
    <name type="ordered locus">VNG_6081G</name>
</gene>
<gene>
    <name evidence="1" type="primary">fni4</name>
    <name type="ordered locus">VNG_6445G</name>
</gene>
<keyword id="KW-0963">Cytoplasm</keyword>
<keyword id="KW-0285">Flavoprotein</keyword>
<keyword id="KW-0288">FMN</keyword>
<keyword id="KW-0413">Isomerase</keyword>
<keyword id="KW-0414">Isoprene biosynthesis</keyword>
<keyword id="KW-0460">Magnesium</keyword>
<keyword id="KW-0479">Metal-binding</keyword>
<keyword id="KW-0521">NADP</keyword>
<keyword id="KW-0614">Plasmid</keyword>
<keyword id="KW-1185">Reference proteome</keyword>
<reference key="1">
    <citation type="journal article" date="1998" name="Genome Res.">
        <title>Snapshot of a large dynamic replicon in a halophilic archaeon: megaplasmid or minichromosome?</title>
        <authorList>
            <person name="Ng W.V."/>
            <person name="Ciufo S.A."/>
            <person name="Smith T.M."/>
            <person name="Bumgarner R.E."/>
            <person name="Baskin D."/>
            <person name="Faust J."/>
            <person name="Hall B."/>
            <person name="Loretz C."/>
            <person name="Seto J."/>
            <person name="Slagel J."/>
            <person name="Hood L."/>
            <person name="DasSarma S."/>
        </authorList>
    </citation>
    <scope>NUCLEOTIDE SEQUENCE [LARGE SCALE GENOMIC DNA]</scope>
    <source>
        <strain>ATCC 700922 / JCM 11081 / NRC-1</strain>
        <plasmid>pNRC100</plasmid>
    </source>
</reference>
<reference key="2">
    <citation type="journal article" date="2000" name="Proc. Natl. Acad. Sci. U.S.A.">
        <title>Genome sequence of Halobacterium species NRC-1.</title>
        <authorList>
            <person name="Ng W.V."/>
            <person name="Kennedy S.P."/>
            <person name="Mahairas G.G."/>
            <person name="Berquist B."/>
            <person name="Pan M."/>
            <person name="Shukla H.D."/>
            <person name="Lasky S.R."/>
            <person name="Baliga N.S."/>
            <person name="Thorsson V."/>
            <person name="Sbrogna J."/>
            <person name="Swartzell S."/>
            <person name="Weir D."/>
            <person name="Hall J."/>
            <person name="Dahl T.A."/>
            <person name="Welti R."/>
            <person name="Goo Y.A."/>
            <person name="Leithauser B."/>
            <person name="Keller K."/>
            <person name="Cruz R."/>
            <person name="Danson M.J."/>
            <person name="Hough D.W."/>
            <person name="Maddocks D.G."/>
            <person name="Jablonski P.E."/>
            <person name="Krebs M.P."/>
            <person name="Angevine C.M."/>
            <person name="Dale H."/>
            <person name="Isenbarger T.A."/>
            <person name="Peck R.F."/>
            <person name="Pohlschroder M."/>
            <person name="Spudich J.L."/>
            <person name="Jung K.-H."/>
            <person name="Alam M."/>
            <person name="Freitas T."/>
            <person name="Hou S."/>
            <person name="Daniels C.J."/>
            <person name="Dennis P.P."/>
            <person name="Omer A.D."/>
            <person name="Ebhardt H."/>
            <person name="Lowe T.M."/>
            <person name="Liang P."/>
            <person name="Riley M."/>
            <person name="Hood L."/>
            <person name="DasSarma S."/>
        </authorList>
    </citation>
    <scope>NUCLEOTIDE SEQUENCE [LARGE SCALE GENOMIC DNA]</scope>
    <source>
        <strain>ATCC 700922 / JCM 11081 / NRC-1</strain>
        <plasmid>pNRC200</plasmid>
    </source>
</reference>
<proteinExistence type="inferred from homology"/>
<accession>Q9HHE4</accession>
<accession>O54623</accession>
<organism>
    <name type="scientific">Halobacterium salinarum (strain ATCC 700922 / JCM 11081 / NRC-1)</name>
    <name type="common">Halobacterium halobium</name>
    <dbReference type="NCBI Taxonomy" id="64091"/>
    <lineage>
        <taxon>Archaea</taxon>
        <taxon>Methanobacteriati</taxon>
        <taxon>Methanobacteriota</taxon>
        <taxon>Stenosarchaea group</taxon>
        <taxon>Halobacteria</taxon>
        <taxon>Halobacteriales</taxon>
        <taxon>Halobacteriaceae</taxon>
        <taxon>Halobacterium</taxon>
        <taxon>Halobacterium salinarum NRC-34001</taxon>
    </lineage>
</organism>
<sequence>MTAQDSTQTEDRKDDHLQIVQERDVETTGTGFDDVHLVHNALPELDYDAIDPSIDFLGHDLSAPIFIESMTGGHHNTTEINRALARAASETGIAMGLGSQRAGLELDDERVLESYTVVRDAAPDAFIYGNLGAAQLREYDIEMVEQAVEMIDADALAVHLNFLQEATQPEGDVDGRNCVAAIERVSEALSVPIIVKETGNGISGETARELTAAGVDALDVAGKGGTTWSGIEAYRAAAANAPRQKQIGTLFREWGIPTAASTIECVAEHDCVIASGGVRTGLDVAKAIALGARAGGLAKPFLKPATDGPDAVIERVGDLIAELRTAMFVTGSGSIDELQQVEYVLHGKTREYVEQRTSSE</sequence>
<dbReference type="EC" id="5.3.3.2" evidence="1"/>
<dbReference type="EMBL" id="AF016485">
    <property type="protein sequence ID" value="AAC82844.1"/>
    <property type="status" value="ALT_INIT"/>
    <property type="molecule type" value="Genomic_DNA"/>
</dbReference>
<dbReference type="EMBL" id="AF016485">
    <property type="protein sequence ID" value="AAC82933.1"/>
    <property type="status" value="ALT_INIT"/>
    <property type="molecule type" value="Genomic_DNA"/>
</dbReference>
<dbReference type="EMBL" id="AE004438">
    <property type="protein sequence ID" value="AAG20768.1"/>
    <property type="molecule type" value="Genomic_DNA"/>
</dbReference>
<dbReference type="EMBL" id="AE004438">
    <property type="protein sequence ID" value="AAG21040.1"/>
    <property type="molecule type" value="Genomic_DNA"/>
</dbReference>
<dbReference type="RefSeq" id="WP_010904022.1">
    <property type="nucleotide sequence ID" value="NZ_BK010831.1"/>
</dbReference>
<dbReference type="SMR" id="Q9HHE4"/>
<dbReference type="FunCoup" id="Q9HHE4">
    <property type="interactions" value="17"/>
</dbReference>
<dbReference type="GeneID" id="91110675"/>
<dbReference type="KEGG" id="hal:AAC82844.1"/>
<dbReference type="KEGG" id="hal:AAC82933.1"/>
<dbReference type="KEGG" id="hal:VNG_6081G"/>
<dbReference type="KEGG" id="hal:VNG_6445G"/>
<dbReference type="PATRIC" id="fig|64091.14.peg.2138"/>
<dbReference type="HOGENOM" id="CLU_065515_1_0_2"/>
<dbReference type="InParanoid" id="Q9HHE4"/>
<dbReference type="OrthoDB" id="371955at2157"/>
<dbReference type="PhylomeDB" id="Q9HHE4"/>
<dbReference type="Proteomes" id="UP000000554">
    <property type="component" value="Plasmid pNRC100"/>
</dbReference>
<dbReference type="Proteomes" id="UP000000554">
    <property type="component" value="Plasmid pNRC200"/>
</dbReference>
<dbReference type="GO" id="GO:0005737">
    <property type="term" value="C:cytoplasm"/>
    <property type="evidence" value="ECO:0007669"/>
    <property type="project" value="UniProtKB-SubCell"/>
</dbReference>
<dbReference type="GO" id="GO:0010181">
    <property type="term" value="F:FMN binding"/>
    <property type="evidence" value="ECO:0007669"/>
    <property type="project" value="UniProtKB-UniRule"/>
</dbReference>
<dbReference type="GO" id="GO:0004452">
    <property type="term" value="F:isopentenyl-diphosphate delta-isomerase activity"/>
    <property type="evidence" value="ECO:0007669"/>
    <property type="project" value="UniProtKB-UniRule"/>
</dbReference>
<dbReference type="GO" id="GO:0000287">
    <property type="term" value="F:magnesium ion binding"/>
    <property type="evidence" value="ECO:0007669"/>
    <property type="project" value="UniProtKB-UniRule"/>
</dbReference>
<dbReference type="GO" id="GO:0070402">
    <property type="term" value="F:NADPH binding"/>
    <property type="evidence" value="ECO:0007669"/>
    <property type="project" value="UniProtKB-UniRule"/>
</dbReference>
<dbReference type="GO" id="GO:0016491">
    <property type="term" value="F:oxidoreductase activity"/>
    <property type="evidence" value="ECO:0007669"/>
    <property type="project" value="InterPro"/>
</dbReference>
<dbReference type="GO" id="GO:0008299">
    <property type="term" value="P:isoprenoid biosynthetic process"/>
    <property type="evidence" value="ECO:0007669"/>
    <property type="project" value="UniProtKB-UniRule"/>
</dbReference>
<dbReference type="CDD" id="cd02811">
    <property type="entry name" value="IDI-2_FMN"/>
    <property type="match status" value="1"/>
</dbReference>
<dbReference type="Gene3D" id="3.20.20.70">
    <property type="entry name" value="Aldolase class I"/>
    <property type="match status" value="1"/>
</dbReference>
<dbReference type="HAMAP" id="MF_00354">
    <property type="entry name" value="Idi_2"/>
    <property type="match status" value="1"/>
</dbReference>
<dbReference type="InterPro" id="IPR013785">
    <property type="entry name" value="Aldolase_TIM"/>
</dbReference>
<dbReference type="InterPro" id="IPR000262">
    <property type="entry name" value="FMN-dep_DH"/>
</dbReference>
<dbReference type="InterPro" id="IPR011179">
    <property type="entry name" value="IPdP_isomerase"/>
</dbReference>
<dbReference type="NCBIfam" id="TIGR02151">
    <property type="entry name" value="IPP_isom_2"/>
    <property type="match status" value="1"/>
</dbReference>
<dbReference type="PANTHER" id="PTHR43665">
    <property type="entry name" value="ISOPENTENYL-DIPHOSPHATE DELTA-ISOMERASE"/>
    <property type="match status" value="1"/>
</dbReference>
<dbReference type="PANTHER" id="PTHR43665:SF1">
    <property type="entry name" value="ISOPENTENYL-DIPHOSPHATE DELTA-ISOMERASE"/>
    <property type="match status" value="1"/>
</dbReference>
<dbReference type="Pfam" id="PF01070">
    <property type="entry name" value="FMN_dh"/>
    <property type="match status" value="2"/>
</dbReference>
<dbReference type="PIRSF" id="PIRSF003314">
    <property type="entry name" value="IPP_isomerase"/>
    <property type="match status" value="1"/>
</dbReference>
<dbReference type="SMART" id="SM01240">
    <property type="entry name" value="IMPDH"/>
    <property type="match status" value="1"/>
</dbReference>
<dbReference type="SUPFAM" id="SSF51395">
    <property type="entry name" value="FMN-linked oxidoreductases"/>
    <property type="match status" value="1"/>
</dbReference>
<evidence type="ECO:0000255" key="1">
    <source>
        <dbReference type="HAMAP-Rule" id="MF_00354"/>
    </source>
</evidence>
<evidence type="ECO:0000305" key="2"/>
<geneLocation type="plasmid">
    <name>pNRC100</name>
</geneLocation>
<geneLocation type="plasmid">
    <name>pNRC200</name>
</geneLocation>